<sequence>MAKKVQAYVKLQVAAGMANPSPPVGPALGQQGVNIMEFCKAFNAKTESIEKGLPTPVVITVYSDRSFTFVTKTPPAAVLLKKAAGIKSGSGKPNKDKVGKVTSAQVREIAETKAADMTGSDVDAMVRSIAGTARSMGLVVED</sequence>
<reference key="1">
    <citation type="journal article" date="2004" name="Proc. Natl. Acad. Sci. U.S.A.">
        <title>Genome sequence of the enterobacterial phytopathogen Erwinia carotovora subsp. atroseptica and characterization of virulence factors.</title>
        <authorList>
            <person name="Bell K.S."/>
            <person name="Sebaihia M."/>
            <person name="Pritchard L."/>
            <person name="Holden M.T.G."/>
            <person name="Hyman L.J."/>
            <person name="Holeva M.C."/>
            <person name="Thomson N.R."/>
            <person name="Bentley S.D."/>
            <person name="Churcher L.J.C."/>
            <person name="Mungall K."/>
            <person name="Atkin R."/>
            <person name="Bason N."/>
            <person name="Brooks K."/>
            <person name="Chillingworth T."/>
            <person name="Clark K."/>
            <person name="Doggett J."/>
            <person name="Fraser A."/>
            <person name="Hance Z."/>
            <person name="Hauser H."/>
            <person name="Jagels K."/>
            <person name="Moule S."/>
            <person name="Norbertczak H."/>
            <person name="Ormond D."/>
            <person name="Price C."/>
            <person name="Quail M.A."/>
            <person name="Sanders M."/>
            <person name="Walker D."/>
            <person name="Whitehead S."/>
            <person name="Salmond G.P.C."/>
            <person name="Birch P.R.J."/>
            <person name="Parkhill J."/>
            <person name="Toth I.K."/>
        </authorList>
    </citation>
    <scope>NUCLEOTIDE SEQUENCE [LARGE SCALE GENOMIC DNA]</scope>
    <source>
        <strain>SCRI 1043 / ATCC BAA-672</strain>
    </source>
</reference>
<gene>
    <name evidence="1" type="primary">rplK</name>
    <name type="ordered locus">ECA0219</name>
</gene>
<evidence type="ECO:0000255" key="1">
    <source>
        <dbReference type="HAMAP-Rule" id="MF_00736"/>
    </source>
</evidence>
<evidence type="ECO:0000305" key="2"/>
<organism>
    <name type="scientific">Pectobacterium atrosepticum (strain SCRI 1043 / ATCC BAA-672)</name>
    <name type="common">Erwinia carotovora subsp. atroseptica</name>
    <dbReference type="NCBI Taxonomy" id="218491"/>
    <lineage>
        <taxon>Bacteria</taxon>
        <taxon>Pseudomonadati</taxon>
        <taxon>Pseudomonadota</taxon>
        <taxon>Gammaproteobacteria</taxon>
        <taxon>Enterobacterales</taxon>
        <taxon>Pectobacteriaceae</taxon>
        <taxon>Pectobacterium</taxon>
    </lineage>
</organism>
<keyword id="KW-0488">Methylation</keyword>
<keyword id="KW-1185">Reference proteome</keyword>
<keyword id="KW-0687">Ribonucleoprotein</keyword>
<keyword id="KW-0689">Ribosomal protein</keyword>
<keyword id="KW-0694">RNA-binding</keyword>
<keyword id="KW-0699">rRNA-binding</keyword>
<proteinExistence type="inferred from homology"/>
<accession>Q6DAN4</accession>
<protein>
    <recommendedName>
        <fullName evidence="1">Large ribosomal subunit protein uL11</fullName>
    </recommendedName>
    <alternativeName>
        <fullName evidence="2">50S ribosomal protein L11</fullName>
    </alternativeName>
</protein>
<dbReference type="EMBL" id="BX950851">
    <property type="protein sequence ID" value="CAG73138.1"/>
    <property type="molecule type" value="Genomic_DNA"/>
</dbReference>
<dbReference type="RefSeq" id="WP_011091856.1">
    <property type="nucleotide sequence ID" value="NC_004547.2"/>
</dbReference>
<dbReference type="SMR" id="Q6DAN4"/>
<dbReference type="STRING" id="218491.ECA0219"/>
<dbReference type="GeneID" id="57207085"/>
<dbReference type="KEGG" id="eca:ECA0219"/>
<dbReference type="PATRIC" id="fig|218491.5.peg.219"/>
<dbReference type="eggNOG" id="COG0080">
    <property type="taxonomic scope" value="Bacteria"/>
</dbReference>
<dbReference type="HOGENOM" id="CLU_074237_2_0_6"/>
<dbReference type="OrthoDB" id="9802408at2"/>
<dbReference type="Proteomes" id="UP000007966">
    <property type="component" value="Chromosome"/>
</dbReference>
<dbReference type="GO" id="GO:0022625">
    <property type="term" value="C:cytosolic large ribosomal subunit"/>
    <property type="evidence" value="ECO:0007669"/>
    <property type="project" value="TreeGrafter"/>
</dbReference>
<dbReference type="GO" id="GO:0070180">
    <property type="term" value="F:large ribosomal subunit rRNA binding"/>
    <property type="evidence" value="ECO:0007669"/>
    <property type="project" value="UniProtKB-UniRule"/>
</dbReference>
<dbReference type="GO" id="GO:0003735">
    <property type="term" value="F:structural constituent of ribosome"/>
    <property type="evidence" value="ECO:0007669"/>
    <property type="project" value="InterPro"/>
</dbReference>
<dbReference type="GO" id="GO:0006412">
    <property type="term" value="P:translation"/>
    <property type="evidence" value="ECO:0007669"/>
    <property type="project" value="UniProtKB-UniRule"/>
</dbReference>
<dbReference type="CDD" id="cd00349">
    <property type="entry name" value="Ribosomal_L11"/>
    <property type="match status" value="1"/>
</dbReference>
<dbReference type="FunFam" id="1.10.10.250:FF:000001">
    <property type="entry name" value="50S ribosomal protein L11"/>
    <property type="match status" value="1"/>
</dbReference>
<dbReference type="FunFam" id="3.30.1550.10:FF:000001">
    <property type="entry name" value="50S ribosomal protein L11"/>
    <property type="match status" value="1"/>
</dbReference>
<dbReference type="Gene3D" id="1.10.10.250">
    <property type="entry name" value="Ribosomal protein L11, C-terminal domain"/>
    <property type="match status" value="1"/>
</dbReference>
<dbReference type="Gene3D" id="3.30.1550.10">
    <property type="entry name" value="Ribosomal protein L11/L12, N-terminal domain"/>
    <property type="match status" value="1"/>
</dbReference>
<dbReference type="HAMAP" id="MF_00736">
    <property type="entry name" value="Ribosomal_uL11"/>
    <property type="match status" value="1"/>
</dbReference>
<dbReference type="InterPro" id="IPR000911">
    <property type="entry name" value="Ribosomal_uL11"/>
</dbReference>
<dbReference type="InterPro" id="IPR006519">
    <property type="entry name" value="Ribosomal_uL11_bac-typ"/>
</dbReference>
<dbReference type="InterPro" id="IPR020783">
    <property type="entry name" value="Ribosomal_uL11_C"/>
</dbReference>
<dbReference type="InterPro" id="IPR036769">
    <property type="entry name" value="Ribosomal_uL11_C_sf"/>
</dbReference>
<dbReference type="InterPro" id="IPR020785">
    <property type="entry name" value="Ribosomal_uL11_CS"/>
</dbReference>
<dbReference type="InterPro" id="IPR020784">
    <property type="entry name" value="Ribosomal_uL11_N"/>
</dbReference>
<dbReference type="InterPro" id="IPR036796">
    <property type="entry name" value="Ribosomal_uL11_N_sf"/>
</dbReference>
<dbReference type="NCBIfam" id="TIGR01632">
    <property type="entry name" value="L11_bact"/>
    <property type="match status" value="1"/>
</dbReference>
<dbReference type="PANTHER" id="PTHR11661">
    <property type="entry name" value="60S RIBOSOMAL PROTEIN L12"/>
    <property type="match status" value="1"/>
</dbReference>
<dbReference type="PANTHER" id="PTHR11661:SF1">
    <property type="entry name" value="LARGE RIBOSOMAL SUBUNIT PROTEIN UL11M"/>
    <property type="match status" value="1"/>
</dbReference>
<dbReference type="Pfam" id="PF00298">
    <property type="entry name" value="Ribosomal_L11"/>
    <property type="match status" value="1"/>
</dbReference>
<dbReference type="Pfam" id="PF03946">
    <property type="entry name" value="Ribosomal_L11_N"/>
    <property type="match status" value="1"/>
</dbReference>
<dbReference type="SMART" id="SM00649">
    <property type="entry name" value="RL11"/>
    <property type="match status" value="1"/>
</dbReference>
<dbReference type="SUPFAM" id="SSF54747">
    <property type="entry name" value="Ribosomal L11/L12e N-terminal domain"/>
    <property type="match status" value="1"/>
</dbReference>
<dbReference type="SUPFAM" id="SSF46906">
    <property type="entry name" value="Ribosomal protein L11, C-terminal domain"/>
    <property type="match status" value="1"/>
</dbReference>
<dbReference type="PROSITE" id="PS00359">
    <property type="entry name" value="RIBOSOMAL_L11"/>
    <property type="match status" value="1"/>
</dbReference>
<feature type="chain" id="PRO_0000104287" description="Large ribosomal subunit protein uL11">
    <location>
        <begin position="1"/>
        <end position="142"/>
    </location>
</feature>
<name>RL11_PECAS</name>
<comment type="function">
    <text evidence="1">Forms part of the ribosomal stalk which helps the ribosome interact with GTP-bound translation factors.</text>
</comment>
<comment type="subunit">
    <text evidence="1">Part of the ribosomal stalk of the 50S ribosomal subunit. Interacts with L10 and the large rRNA to form the base of the stalk. L10 forms an elongated spine to which L12 dimers bind in a sequential fashion forming a multimeric L10(L12)X complex.</text>
</comment>
<comment type="PTM">
    <text evidence="1">One or more lysine residues are methylated.</text>
</comment>
<comment type="similarity">
    <text evidence="1">Belongs to the universal ribosomal protein uL11 family.</text>
</comment>